<proteinExistence type="inferred from homology"/>
<reference key="1">
    <citation type="journal article" date="2005" name="J. Bacteriol.">
        <title>Whole-genome sequencing of Staphylococcus haemolyticus uncovers the extreme plasticity of its genome and the evolution of human-colonizing staphylococcal species.</title>
        <authorList>
            <person name="Takeuchi F."/>
            <person name="Watanabe S."/>
            <person name="Baba T."/>
            <person name="Yuzawa H."/>
            <person name="Ito T."/>
            <person name="Morimoto Y."/>
            <person name="Kuroda M."/>
            <person name="Cui L."/>
            <person name="Takahashi M."/>
            <person name="Ankai A."/>
            <person name="Baba S."/>
            <person name="Fukui S."/>
            <person name="Lee J.C."/>
            <person name="Hiramatsu K."/>
        </authorList>
    </citation>
    <scope>NUCLEOTIDE SEQUENCE [LARGE SCALE GENOMIC DNA]</scope>
    <source>
        <strain>JCSC1435</strain>
    </source>
</reference>
<gene>
    <name evidence="1" type="primary">murA2</name>
    <name type="synonym">murA</name>
    <name type="ordered locus">SH0935</name>
</gene>
<protein>
    <recommendedName>
        <fullName evidence="1">UDP-N-acetylglucosamine 1-carboxyvinyltransferase 2</fullName>
        <ecNumber evidence="1">2.5.1.7</ecNumber>
    </recommendedName>
    <alternativeName>
        <fullName evidence="1">Enoylpyruvate transferase 2</fullName>
    </alternativeName>
    <alternativeName>
        <fullName evidence="1">UDP-N-acetylglucosamine enolpyruvyl transferase 2</fullName>
        <shortName evidence="1">EPT 2</shortName>
    </alternativeName>
</protein>
<name>MURA2_STAHJ</name>
<comment type="function">
    <text evidence="1">Cell wall formation. Adds enolpyruvyl to UDP-N-acetylglucosamine.</text>
</comment>
<comment type="catalytic activity">
    <reaction evidence="1">
        <text>phosphoenolpyruvate + UDP-N-acetyl-alpha-D-glucosamine = UDP-N-acetyl-3-O-(1-carboxyvinyl)-alpha-D-glucosamine + phosphate</text>
        <dbReference type="Rhea" id="RHEA:18681"/>
        <dbReference type="ChEBI" id="CHEBI:43474"/>
        <dbReference type="ChEBI" id="CHEBI:57705"/>
        <dbReference type="ChEBI" id="CHEBI:58702"/>
        <dbReference type="ChEBI" id="CHEBI:68483"/>
        <dbReference type="EC" id="2.5.1.7"/>
    </reaction>
</comment>
<comment type="pathway">
    <text evidence="1">Cell wall biogenesis; peptidoglycan biosynthesis.</text>
</comment>
<comment type="subcellular location">
    <subcellularLocation>
        <location evidence="1">Cytoplasm</location>
    </subcellularLocation>
</comment>
<comment type="similarity">
    <text evidence="1">Belongs to the EPSP synthase family. MurA subfamily.</text>
</comment>
<accession>Q4L7Y1</accession>
<organism>
    <name type="scientific">Staphylococcus haemolyticus (strain JCSC1435)</name>
    <dbReference type="NCBI Taxonomy" id="279808"/>
    <lineage>
        <taxon>Bacteria</taxon>
        <taxon>Bacillati</taxon>
        <taxon>Bacillota</taxon>
        <taxon>Bacilli</taxon>
        <taxon>Bacillales</taxon>
        <taxon>Staphylococcaceae</taxon>
        <taxon>Staphylococcus</taxon>
    </lineage>
</organism>
<evidence type="ECO:0000255" key="1">
    <source>
        <dbReference type="HAMAP-Rule" id="MF_00111"/>
    </source>
</evidence>
<sequence length="421" mass="45236">MDKIVIKGGNRLTGEVKVEGAKNAVLPVLTASLLASEGQSKLVNVPDLSDVVTINNVLSTLNANVEYNKEEGAVLVDASTTLKEEAPYEYVSKMRASILVMGPLLARLGHAIVALPGGCAIGARPIEQHIKGFEALGAEIHLENGNIYASTKDGLKGTDIHLDFPSVGATQNIIMAASLAKGKTVIENVAKEPEIVDLANYINEMGGKVTGAGTDTITIHGVEKLRGVEHSIIPDRIEAGTLIIAAAITRGDVFVRDAVKEHMTSLIYKLEEMGVNLDFQEDGVRVTAEDELKPVDVKTLPHPGFPTDMQSQMIALLLTAEGHKVITETVFENRFMHVAEFRRMNANITVEGRSAKIQGKSQLQGAQVKATDLRAAAALILAGLVAEGTTQVTELKHLDRGYVNFHEKLKSLGANIERVNY</sequence>
<keyword id="KW-0131">Cell cycle</keyword>
<keyword id="KW-0132">Cell division</keyword>
<keyword id="KW-0133">Cell shape</keyword>
<keyword id="KW-0961">Cell wall biogenesis/degradation</keyword>
<keyword id="KW-0963">Cytoplasm</keyword>
<keyword id="KW-0573">Peptidoglycan synthesis</keyword>
<keyword id="KW-0670">Pyruvate</keyword>
<keyword id="KW-0808">Transferase</keyword>
<dbReference type="EC" id="2.5.1.7" evidence="1"/>
<dbReference type="EMBL" id="AP006716">
    <property type="protein sequence ID" value="BAE04244.1"/>
    <property type="molecule type" value="Genomic_DNA"/>
</dbReference>
<dbReference type="RefSeq" id="WP_011275246.1">
    <property type="nucleotide sequence ID" value="NC_007168.1"/>
</dbReference>
<dbReference type="SMR" id="Q4L7Y1"/>
<dbReference type="KEGG" id="sha:SH0935"/>
<dbReference type="eggNOG" id="COG0766">
    <property type="taxonomic scope" value="Bacteria"/>
</dbReference>
<dbReference type="HOGENOM" id="CLU_027387_0_0_9"/>
<dbReference type="OrthoDB" id="9803760at2"/>
<dbReference type="UniPathway" id="UPA00219"/>
<dbReference type="Proteomes" id="UP000000543">
    <property type="component" value="Chromosome"/>
</dbReference>
<dbReference type="GO" id="GO:0005737">
    <property type="term" value="C:cytoplasm"/>
    <property type="evidence" value="ECO:0007669"/>
    <property type="project" value="UniProtKB-SubCell"/>
</dbReference>
<dbReference type="GO" id="GO:0008760">
    <property type="term" value="F:UDP-N-acetylglucosamine 1-carboxyvinyltransferase activity"/>
    <property type="evidence" value="ECO:0007669"/>
    <property type="project" value="UniProtKB-UniRule"/>
</dbReference>
<dbReference type="GO" id="GO:0051301">
    <property type="term" value="P:cell division"/>
    <property type="evidence" value="ECO:0007669"/>
    <property type="project" value="UniProtKB-KW"/>
</dbReference>
<dbReference type="GO" id="GO:0071555">
    <property type="term" value="P:cell wall organization"/>
    <property type="evidence" value="ECO:0007669"/>
    <property type="project" value="UniProtKB-KW"/>
</dbReference>
<dbReference type="GO" id="GO:0009252">
    <property type="term" value="P:peptidoglycan biosynthetic process"/>
    <property type="evidence" value="ECO:0007669"/>
    <property type="project" value="UniProtKB-UniRule"/>
</dbReference>
<dbReference type="GO" id="GO:0008360">
    <property type="term" value="P:regulation of cell shape"/>
    <property type="evidence" value="ECO:0007669"/>
    <property type="project" value="UniProtKB-KW"/>
</dbReference>
<dbReference type="GO" id="GO:0019277">
    <property type="term" value="P:UDP-N-acetylgalactosamine biosynthetic process"/>
    <property type="evidence" value="ECO:0007669"/>
    <property type="project" value="InterPro"/>
</dbReference>
<dbReference type="CDD" id="cd01555">
    <property type="entry name" value="UdpNAET"/>
    <property type="match status" value="1"/>
</dbReference>
<dbReference type="FunFam" id="3.65.10.10:FF:000001">
    <property type="entry name" value="UDP-N-acetylglucosamine 1-carboxyvinyltransferase"/>
    <property type="match status" value="1"/>
</dbReference>
<dbReference type="Gene3D" id="3.65.10.10">
    <property type="entry name" value="Enolpyruvate transferase domain"/>
    <property type="match status" value="2"/>
</dbReference>
<dbReference type="HAMAP" id="MF_00111">
    <property type="entry name" value="MurA"/>
    <property type="match status" value="1"/>
</dbReference>
<dbReference type="InterPro" id="IPR001986">
    <property type="entry name" value="Enolpyruvate_Tfrase_dom"/>
</dbReference>
<dbReference type="InterPro" id="IPR036968">
    <property type="entry name" value="Enolpyruvate_Tfrase_sf"/>
</dbReference>
<dbReference type="InterPro" id="IPR050068">
    <property type="entry name" value="MurA_subfamily"/>
</dbReference>
<dbReference type="InterPro" id="IPR013792">
    <property type="entry name" value="RNA3'P_cycl/enolpyr_Trfase_a/b"/>
</dbReference>
<dbReference type="InterPro" id="IPR005750">
    <property type="entry name" value="UDP_GlcNAc_COvinyl_MurA"/>
</dbReference>
<dbReference type="NCBIfam" id="TIGR01072">
    <property type="entry name" value="murA"/>
    <property type="match status" value="1"/>
</dbReference>
<dbReference type="NCBIfam" id="NF006873">
    <property type="entry name" value="PRK09369.1"/>
    <property type="match status" value="1"/>
</dbReference>
<dbReference type="PANTHER" id="PTHR43783">
    <property type="entry name" value="UDP-N-ACETYLGLUCOSAMINE 1-CARBOXYVINYLTRANSFERASE"/>
    <property type="match status" value="1"/>
</dbReference>
<dbReference type="PANTHER" id="PTHR43783:SF1">
    <property type="entry name" value="UDP-N-ACETYLGLUCOSAMINE 1-CARBOXYVINYLTRANSFERASE"/>
    <property type="match status" value="1"/>
</dbReference>
<dbReference type="Pfam" id="PF00275">
    <property type="entry name" value="EPSP_synthase"/>
    <property type="match status" value="1"/>
</dbReference>
<dbReference type="SUPFAM" id="SSF55205">
    <property type="entry name" value="EPT/RTPC-like"/>
    <property type="match status" value="1"/>
</dbReference>
<feature type="chain" id="PRO_0000231267" description="UDP-N-acetylglucosamine 1-carboxyvinyltransferase 2">
    <location>
        <begin position="1"/>
        <end position="421"/>
    </location>
</feature>
<feature type="active site" description="Proton donor" evidence="1">
    <location>
        <position position="119"/>
    </location>
</feature>
<feature type="binding site" evidence="1">
    <location>
        <begin position="22"/>
        <end position="23"/>
    </location>
    <ligand>
        <name>phosphoenolpyruvate</name>
        <dbReference type="ChEBI" id="CHEBI:58702"/>
    </ligand>
</feature>
<feature type="binding site" evidence="1">
    <location>
        <position position="95"/>
    </location>
    <ligand>
        <name>UDP-N-acetyl-alpha-D-glucosamine</name>
        <dbReference type="ChEBI" id="CHEBI:57705"/>
    </ligand>
</feature>
<feature type="binding site" evidence="1">
    <location>
        <begin position="124"/>
        <end position="128"/>
    </location>
    <ligand>
        <name>UDP-N-acetyl-alpha-D-glucosamine</name>
        <dbReference type="ChEBI" id="CHEBI:57705"/>
    </ligand>
</feature>
<feature type="binding site" evidence="1">
    <location>
        <position position="308"/>
    </location>
    <ligand>
        <name>UDP-N-acetyl-alpha-D-glucosamine</name>
        <dbReference type="ChEBI" id="CHEBI:57705"/>
    </ligand>
</feature>
<feature type="binding site" evidence="1">
    <location>
        <position position="330"/>
    </location>
    <ligand>
        <name>UDP-N-acetyl-alpha-D-glucosamine</name>
        <dbReference type="ChEBI" id="CHEBI:57705"/>
    </ligand>
</feature>
<feature type="modified residue" description="2-(S-cysteinyl)pyruvic acid O-phosphothioketal" evidence="1">
    <location>
        <position position="119"/>
    </location>
</feature>